<organism>
    <name type="scientific">Aliivibrio fischeri (strain ATCC 700601 / ES114)</name>
    <name type="common">Vibrio fischeri</name>
    <dbReference type="NCBI Taxonomy" id="312309"/>
    <lineage>
        <taxon>Bacteria</taxon>
        <taxon>Pseudomonadati</taxon>
        <taxon>Pseudomonadota</taxon>
        <taxon>Gammaproteobacteria</taxon>
        <taxon>Vibrionales</taxon>
        <taxon>Vibrionaceae</taxon>
        <taxon>Aliivibrio</taxon>
    </lineage>
</organism>
<name>URE2_ALIF1</name>
<proteinExistence type="inferred from homology"/>
<sequence>MIPGELRVNDDLGQIELNVGRTTQTLSVANYGDRPIQVGSHYHFYEVNEALHFDREATKGFRLNIPAGMAIRFEPGQRRTIELVEFAGKREIYGFQAAIMGNVDKHITTTIPDDKEVK</sequence>
<feature type="chain" id="PRO_0000234282" description="Urease subunit beta">
    <location>
        <begin position="1"/>
        <end position="118"/>
    </location>
</feature>
<keyword id="KW-0963">Cytoplasm</keyword>
<keyword id="KW-0378">Hydrolase</keyword>
<keyword id="KW-1185">Reference proteome</keyword>
<accession>Q5E727</accession>
<evidence type="ECO:0000255" key="1">
    <source>
        <dbReference type="HAMAP-Rule" id="MF_01954"/>
    </source>
</evidence>
<protein>
    <recommendedName>
        <fullName evidence="1">Urease subunit beta</fullName>
        <ecNumber evidence="1">3.5.1.5</ecNumber>
    </recommendedName>
    <alternativeName>
        <fullName evidence="1">Urea amidohydrolase subunit beta</fullName>
    </alternativeName>
</protein>
<comment type="catalytic activity">
    <reaction evidence="1">
        <text>urea + 2 H2O + H(+) = hydrogencarbonate + 2 NH4(+)</text>
        <dbReference type="Rhea" id="RHEA:20557"/>
        <dbReference type="ChEBI" id="CHEBI:15377"/>
        <dbReference type="ChEBI" id="CHEBI:15378"/>
        <dbReference type="ChEBI" id="CHEBI:16199"/>
        <dbReference type="ChEBI" id="CHEBI:17544"/>
        <dbReference type="ChEBI" id="CHEBI:28938"/>
        <dbReference type="EC" id="3.5.1.5"/>
    </reaction>
</comment>
<comment type="pathway">
    <text evidence="1">Nitrogen metabolism; urea degradation; CO(2) and NH(3) from urea (urease route): step 1/1.</text>
</comment>
<comment type="subunit">
    <text evidence="1">Heterotrimer of UreA (gamma), UreB (beta) and UreC (alpha) subunits. Three heterotrimers associate to form the active enzyme.</text>
</comment>
<comment type="subcellular location">
    <subcellularLocation>
        <location evidence="1">Cytoplasm</location>
    </subcellularLocation>
</comment>
<comment type="similarity">
    <text evidence="1">Belongs to the urease beta subunit family.</text>
</comment>
<reference key="1">
    <citation type="journal article" date="2005" name="Proc. Natl. Acad. Sci. U.S.A.">
        <title>Complete genome sequence of Vibrio fischeri: a symbiotic bacterium with pathogenic congeners.</title>
        <authorList>
            <person name="Ruby E.G."/>
            <person name="Urbanowski M."/>
            <person name="Campbell J."/>
            <person name="Dunn A."/>
            <person name="Faini M."/>
            <person name="Gunsalus R."/>
            <person name="Lostroh P."/>
            <person name="Lupp C."/>
            <person name="McCann J."/>
            <person name="Millikan D."/>
            <person name="Schaefer A."/>
            <person name="Stabb E."/>
            <person name="Stevens A."/>
            <person name="Visick K."/>
            <person name="Whistler C."/>
            <person name="Greenberg E.P."/>
        </authorList>
    </citation>
    <scope>NUCLEOTIDE SEQUENCE [LARGE SCALE GENOMIC DNA]</scope>
    <source>
        <strain>ATCC 700601 / ES114</strain>
    </source>
</reference>
<gene>
    <name evidence="1" type="primary">ureB</name>
    <name type="ordered locus">VF_0674</name>
</gene>
<dbReference type="EC" id="3.5.1.5" evidence="1"/>
<dbReference type="EMBL" id="CP000020">
    <property type="protein sequence ID" value="AAW85169.1"/>
    <property type="molecule type" value="Genomic_DNA"/>
</dbReference>
<dbReference type="RefSeq" id="WP_011261403.1">
    <property type="nucleotide sequence ID" value="NC_006840.2"/>
</dbReference>
<dbReference type="RefSeq" id="YP_204057.1">
    <property type="nucleotide sequence ID" value="NC_006840.2"/>
</dbReference>
<dbReference type="SMR" id="Q5E727"/>
<dbReference type="STRING" id="312309.VF_0674"/>
<dbReference type="EnsemblBacteria" id="AAW85169">
    <property type="protein sequence ID" value="AAW85169"/>
    <property type="gene ID" value="VF_0674"/>
</dbReference>
<dbReference type="GeneID" id="54163329"/>
<dbReference type="KEGG" id="vfi:VF_0674"/>
<dbReference type="PATRIC" id="fig|312309.11.peg.667"/>
<dbReference type="eggNOG" id="COG0832">
    <property type="taxonomic scope" value="Bacteria"/>
</dbReference>
<dbReference type="HOGENOM" id="CLU_129707_1_1_6"/>
<dbReference type="OrthoDB" id="9797217at2"/>
<dbReference type="UniPathway" id="UPA00258">
    <property type="reaction ID" value="UER00370"/>
</dbReference>
<dbReference type="Proteomes" id="UP000000537">
    <property type="component" value="Chromosome I"/>
</dbReference>
<dbReference type="GO" id="GO:0035550">
    <property type="term" value="C:urease complex"/>
    <property type="evidence" value="ECO:0007669"/>
    <property type="project" value="InterPro"/>
</dbReference>
<dbReference type="GO" id="GO:0009039">
    <property type="term" value="F:urease activity"/>
    <property type="evidence" value="ECO:0007669"/>
    <property type="project" value="UniProtKB-UniRule"/>
</dbReference>
<dbReference type="GO" id="GO:0043419">
    <property type="term" value="P:urea catabolic process"/>
    <property type="evidence" value="ECO:0007669"/>
    <property type="project" value="UniProtKB-UniRule"/>
</dbReference>
<dbReference type="CDD" id="cd00407">
    <property type="entry name" value="Urease_beta"/>
    <property type="match status" value="1"/>
</dbReference>
<dbReference type="FunFam" id="2.10.150.10:FF:000001">
    <property type="entry name" value="Urease subunit beta"/>
    <property type="match status" value="1"/>
</dbReference>
<dbReference type="Gene3D" id="2.10.150.10">
    <property type="entry name" value="Urease, beta subunit"/>
    <property type="match status" value="1"/>
</dbReference>
<dbReference type="HAMAP" id="MF_01954">
    <property type="entry name" value="Urease_beta"/>
    <property type="match status" value="1"/>
</dbReference>
<dbReference type="InterPro" id="IPR002019">
    <property type="entry name" value="Urease_beta-like"/>
</dbReference>
<dbReference type="InterPro" id="IPR036461">
    <property type="entry name" value="Urease_betasu_sf"/>
</dbReference>
<dbReference type="InterPro" id="IPR050069">
    <property type="entry name" value="Urease_subunit"/>
</dbReference>
<dbReference type="NCBIfam" id="NF009682">
    <property type="entry name" value="PRK13203.1"/>
    <property type="match status" value="1"/>
</dbReference>
<dbReference type="NCBIfam" id="TIGR00192">
    <property type="entry name" value="urease_beta"/>
    <property type="match status" value="1"/>
</dbReference>
<dbReference type="PANTHER" id="PTHR33569">
    <property type="entry name" value="UREASE"/>
    <property type="match status" value="1"/>
</dbReference>
<dbReference type="PANTHER" id="PTHR33569:SF1">
    <property type="entry name" value="UREASE"/>
    <property type="match status" value="1"/>
</dbReference>
<dbReference type="Pfam" id="PF00699">
    <property type="entry name" value="Urease_beta"/>
    <property type="match status" value="1"/>
</dbReference>
<dbReference type="SUPFAM" id="SSF51278">
    <property type="entry name" value="Urease, beta-subunit"/>
    <property type="match status" value="1"/>
</dbReference>